<accession>B2T2E3</accession>
<sequence length="718" mass="77230">MTMFNKIVKEFQWGQHKVRLETGEIARQASGAVIVDVEDTVVLATVVGAKTAKPGQDFFPLTVDYLEKTYAAGKIPGGFFRREGRPSEGETLISRLIDRPLRPLFPEGFYNEVQVVIHVLSLNPEIPADIPALIGASAALAVSGLPFNGPVGAARVAYINNEYVLNPTRPQMKESALDLIVAGTERAVLMVESEAQQLSEEVMLGGVVFGHEQMQIAIDAIHDLVREGGKPEWDWQPAAKNEPLIARVTELAQADLLAAYQLRDKQARSAKLKEVYAATSKKLEEDAAAGGTVAADKATVGNVLFDIEAKIVRTQILNGEPRIDGRDTRTVRPIEIRTGVLPRTHGSALFTRGETQAMVVATLGTKGDEQNIDALEGEYRERFMLHYNMPPFATGETGRVGSPKRREIGHGRLAKRALAACLPSADEFGYSIRVVSEITESNGSSSMASVCGGCLALMDAGVPMKAHVAGIAMGLILEGNKFAVLTDILGDEDHLGDMDFKVAGTEQGVTALQMDIKIQGITKEIMQVALAQAKEGRMHILSKMTSAVSGANTVLSDYAPRMITIKINPEKIRDVIGKGGSVIRALTEETGTTIDISDDGVVTIASTSSEGMAEAKKRIENITLEVEVGQVYEGTVLKLLDFGAIVNILPGKDGLLHISEIANERIKDINDYLKDGQQVKVKVIQTDEKGRVRLSAKALLNEGANGASGAPQGEPTPQ</sequence>
<feature type="chain" id="PRO_1000147898" description="Polyribonucleotide nucleotidyltransferase">
    <location>
        <begin position="1"/>
        <end position="718"/>
    </location>
</feature>
<feature type="domain" description="KH" evidence="1">
    <location>
        <begin position="560"/>
        <end position="619"/>
    </location>
</feature>
<feature type="domain" description="S1 motif" evidence="1">
    <location>
        <begin position="629"/>
        <end position="697"/>
    </location>
</feature>
<feature type="binding site" evidence="1">
    <location>
        <position position="493"/>
    </location>
    <ligand>
        <name>Mg(2+)</name>
        <dbReference type="ChEBI" id="CHEBI:18420"/>
    </ligand>
</feature>
<feature type="binding site" evidence="1">
    <location>
        <position position="499"/>
    </location>
    <ligand>
        <name>Mg(2+)</name>
        <dbReference type="ChEBI" id="CHEBI:18420"/>
    </ligand>
</feature>
<protein>
    <recommendedName>
        <fullName evidence="1">Polyribonucleotide nucleotidyltransferase</fullName>
        <ecNumber evidence="1">2.7.7.8</ecNumber>
    </recommendedName>
    <alternativeName>
        <fullName evidence="1">Polynucleotide phosphorylase</fullName>
        <shortName evidence="1">PNPase</shortName>
    </alternativeName>
</protein>
<proteinExistence type="inferred from homology"/>
<evidence type="ECO:0000255" key="1">
    <source>
        <dbReference type="HAMAP-Rule" id="MF_01595"/>
    </source>
</evidence>
<keyword id="KW-0963">Cytoplasm</keyword>
<keyword id="KW-0460">Magnesium</keyword>
<keyword id="KW-0479">Metal-binding</keyword>
<keyword id="KW-0548">Nucleotidyltransferase</keyword>
<keyword id="KW-0694">RNA-binding</keyword>
<keyword id="KW-0808">Transferase</keyword>
<dbReference type="EC" id="2.7.7.8" evidence="1"/>
<dbReference type="EMBL" id="CP001052">
    <property type="protein sequence ID" value="ACD15754.1"/>
    <property type="molecule type" value="Genomic_DNA"/>
</dbReference>
<dbReference type="RefSeq" id="WP_012432372.1">
    <property type="nucleotide sequence ID" value="NC_010681.1"/>
</dbReference>
<dbReference type="SMR" id="B2T2E3"/>
<dbReference type="STRING" id="398527.Bphyt_1339"/>
<dbReference type="KEGG" id="bpy:Bphyt_1339"/>
<dbReference type="eggNOG" id="COG1185">
    <property type="taxonomic scope" value="Bacteria"/>
</dbReference>
<dbReference type="HOGENOM" id="CLU_004217_2_2_4"/>
<dbReference type="Proteomes" id="UP000001739">
    <property type="component" value="Chromosome 1"/>
</dbReference>
<dbReference type="GO" id="GO:0005829">
    <property type="term" value="C:cytosol"/>
    <property type="evidence" value="ECO:0007669"/>
    <property type="project" value="TreeGrafter"/>
</dbReference>
<dbReference type="GO" id="GO:0000175">
    <property type="term" value="F:3'-5'-RNA exonuclease activity"/>
    <property type="evidence" value="ECO:0007669"/>
    <property type="project" value="TreeGrafter"/>
</dbReference>
<dbReference type="GO" id="GO:0000287">
    <property type="term" value="F:magnesium ion binding"/>
    <property type="evidence" value="ECO:0007669"/>
    <property type="project" value="UniProtKB-UniRule"/>
</dbReference>
<dbReference type="GO" id="GO:0004654">
    <property type="term" value="F:polyribonucleotide nucleotidyltransferase activity"/>
    <property type="evidence" value="ECO:0007669"/>
    <property type="project" value="UniProtKB-UniRule"/>
</dbReference>
<dbReference type="GO" id="GO:0003723">
    <property type="term" value="F:RNA binding"/>
    <property type="evidence" value="ECO:0007669"/>
    <property type="project" value="UniProtKB-UniRule"/>
</dbReference>
<dbReference type="GO" id="GO:0006402">
    <property type="term" value="P:mRNA catabolic process"/>
    <property type="evidence" value="ECO:0007669"/>
    <property type="project" value="UniProtKB-UniRule"/>
</dbReference>
<dbReference type="GO" id="GO:0006396">
    <property type="term" value="P:RNA processing"/>
    <property type="evidence" value="ECO:0007669"/>
    <property type="project" value="InterPro"/>
</dbReference>
<dbReference type="CDD" id="cd02393">
    <property type="entry name" value="KH-I_PNPase"/>
    <property type="match status" value="1"/>
</dbReference>
<dbReference type="CDD" id="cd11363">
    <property type="entry name" value="RNase_PH_PNPase_1"/>
    <property type="match status" value="1"/>
</dbReference>
<dbReference type="CDD" id="cd11364">
    <property type="entry name" value="RNase_PH_PNPase_2"/>
    <property type="match status" value="1"/>
</dbReference>
<dbReference type="CDD" id="cd04472">
    <property type="entry name" value="S1_PNPase"/>
    <property type="match status" value="1"/>
</dbReference>
<dbReference type="FunFam" id="3.30.1370.10:FF:000001">
    <property type="entry name" value="Polyribonucleotide nucleotidyltransferase"/>
    <property type="match status" value="1"/>
</dbReference>
<dbReference type="FunFam" id="3.30.230.70:FF:000001">
    <property type="entry name" value="Polyribonucleotide nucleotidyltransferase"/>
    <property type="match status" value="1"/>
</dbReference>
<dbReference type="FunFam" id="3.30.230.70:FF:000002">
    <property type="entry name" value="Polyribonucleotide nucleotidyltransferase"/>
    <property type="match status" value="1"/>
</dbReference>
<dbReference type="FunFam" id="2.40.50.140:FF:000189">
    <property type="entry name" value="Polyribonucleotide nucleotidyltransferase, putative"/>
    <property type="match status" value="1"/>
</dbReference>
<dbReference type="Gene3D" id="3.30.230.70">
    <property type="entry name" value="GHMP Kinase, N-terminal domain"/>
    <property type="match status" value="2"/>
</dbReference>
<dbReference type="Gene3D" id="3.30.1370.10">
    <property type="entry name" value="K Homology domain, type 1"/>
    <property type="match status" value="1"/>
</dbReference>
<dbReference type="Gene3D" id="2.40.50.140">
    <property type="entry name" value="Nucleic acid-binding proteins"/>
    <property type="match status" value="1"/>
</dbReference>
<dbReference type="HAMAP" id="MF_01595">
    <property type="entry name" value="PNPase"/>
    <property type="match status" value="1"/>
</dbReference>
<dbReference type="InterPro" id="IPR001247">
    <property type="entry name" value="ExoRNase_PH_dom1"/>
</dbReference>
<dbReference type="InterPro" id="IPR015847">
    <property type="entry name" value="ExoRNase_PH_dom2"/>
</dbReference>
<dbReference type="InterPro" id="IPR036345">
    <property type="entry name" value="ExoRNase_PH_dom2_sf"/>
</dbReference>
<dbReference type="InterPro" id="IPR004087">
    <property type="entry name" value="KH_dom"/>
</dbReference>
<dbReference type="InterPro" id="IPR004088">
    <property type="entry name" value="KH_dom_type_1"/>
</dbReference>
<dbReference type="InterPro" id="IPR036612">
    <property type="entry name" value="KH_dom_type_1_sf"/>
</dbReference>
<dbReference type="InterPro" id="IPR012340">
    <property type="entry name" value="NA-bd_OB-fold"/>
</dbReference>
<dbReference type="InterPro" id="IPR012162">
    <property type="entry name" value="PNPase"/>
</dbReference>
<dbReference type="InterPro" id="IPR027408">
    <property type="entry name" value="PNPase/RNase_PH_dom_sf"/>
</dbReference>
<dbReference type="InterPro" id="IPR015848">
    <property type="entry name" value="PNPase_PH_RNA-bd_bac/org-type"/>
</dbReference>
<dbReference type="InterPro" id="IPR020568">
    <property type="entry name" value="Ribosomal_Su5_D2-typ_SF"/>
</dbReference>
<dbReference type="InterPro" id="IPR003029">
    <property type="entry name" value="S1_domain"/>
</dbReference>
<dbReference type="NCBIfam" id="TIGR03591">
    <property type="entry name" value="polynuc_phos"/>
    <property type="match status" value="1"/>
</dbReference>
<dbReference type="NCBIfam" id="NF008805">
    <property type="entry name" value="PRK11824.1"/>
    <property type="match status" value="1"/>
</dbReference>
<dbReference type="PANTHER" id="PTHR11252">
    <property type="entry name" value="POLYRIBONUCLEOTIDE NUCLEOTIDYLTRANSFERASE"/>
    <property type="match status" value="1"/>
</dbReference>
<dbReference type="PANTHER" id="PTHR11252:SF0">
    <property type="entry name" value="POLYRIBONUCLEOTIDE NUCLEOTIDYLTRANSFERASE 1, MITOCHONDRIAL"/>
    <property type="match status" value="1"/>
</dbReference>
<dbReference type="Pfam" id="PF00013">
    <property type="entry name" value="KH_1"/>
    <property type="match status" value="1"/>
</dbReference>
<dbReference type="Pfam" id="PF03726">
    <property type="entry name" value="PNPase"/>
    <property type="match status" value="1"/>
</dbReference>
<dbReference type="Pfam" id="PF01138">
    <property type="entry name" value="RNase_PH"/>
    <property type="match status" value="2"/>
</dbReference>
<dbReference type="Pfam" id="PF03725">
    <property type="entry name" value="RNase_PH_C"/>
    <property type="match status" value="2"/>
</dbReference>
<dbReference type="Pfam" id="PF00575">
    <property type="entry name" value="S1"/>
    <property type="match status" value="1"/>
</dbReference>
<dbReference type="PIRSF" id="PIRSF005499">
    <property type="entry name" value="PNPase"/>
    <property type="match status" value="1"/>
</dbReference>
<dbReference type="SMART" id="SM00322">
    <property type="entry name" value="KH"/>
    <property type="match status" value="1"/>
</dbReference>
<dbReference type="SMART" id="SM00316">
    <property type="entry name" value="S1"/>
    <property type="match status" value="1"/>
</dbReference>
<dbReference type="SUPFAM" id="SSF54791">
    <property type="entry name" value="Eukaryotic type KH-domain (KH-domain type I)"/>
    <property type="match status" value="1"/>
</dbReference>
<dbReference type="SUPFAM" id="SSF50249">
    <property type="entry name" value="Nucleic acid-binding proteins"/>
    <property type="match status" value="1"/>
</dbReference>
<dbReference type="SUPFAM" id="SSF55666">
    <property type="entry name" value="Ribonuclease PH domain 2-like"/>
    <property type="match status" value="2"/>
</dbReference>
<dbReference type="SUPFAM" id="SSF54211">
    <property type="entry name" value="Ribosomal protein S5 domain 2-like"/>
    <property type="match status" value="2"/>
</dbReference>
<dbReference type="PROSITE" id="PS50084">
    <property type="entry name" value="KH_TYPE_1"/>
    <property type="match status" value="1"/>
</dbReference>
<dbReference type="PROSITE" id="PS50126">
    <property type="entry name" value="S1"/>
    <property type="match status" value="1"/>
</dbReference>
<gene>
    <name evidence="1" type="primary">pnp</name>
    <name type="ordered locus">Bphyt_1339</name>
</gene>
<name>PNP_PARPJ</name>
<comment type="function">
    <text evidence="1">Involved in mRNA degradation. Catalyzes the phosphorolysis of single-stranded polyribonucleotides processively in the 3'- to 5'-direction.</text>
</comment>
<comment type="catalytic activity">
    <reaction evidence="1">
        <text>RNA(n+1) + phosphate = RNA(n) + a ribonucleoside 5'-diphosphate</text>
        <dbReference type="Rhea" id="RHEA:22096"/>
        <dbReference type="Rhea" id="RHEA-COMP:14527"/>
        <dbReference type="Rhea" id="RHEA-COMP:17342"/>
        <dbReference type="ChEBI" id="CHEBI:43474"/>
        <dbReference type="ChEBI" id="CHEBI:57930"/>
        <dbReference type="ChEBI" id="CHEBI:140395"/>
        <dbReference type="EC" id="2.7.7.8"/>
    </reaction>
</comment>
<comment type="cofactor">
    <cofactor evidence="1">
        <name>Mg(2+)</name>
        <dbReference type="ChEBI" id="CHEBI:18420"/>
    </cofactor>
</comment>
<comment type="subcellular location">
    <subcellularLocation>
        <location evidence="1">Cytoplasm</location>
    </subcellularLocation>
</comment>
<comment type="similarity">
    <text evidence="1">Belongs to the polyribonucleotide nucleotidyltransferase family.</text>
</comment>
<reference key="1">
    <citation type="journal article" date="2011" name="J. Bacteriol.">
        <title>Complete genome sequence of the plant growth-promoting endophyte Burkholderia phytofirmans strain PsJN.</title>
        <authorList>
            <person name="Weilharter A."/>
            <person name="Mitter B."/>
            <person name="Shin M.V."/>
            <person name="Chain P.S."/>
            <person name="Nowak J."/>
            <person name="Sessitsch A."/>
        </authorList>
    </citation>
    <scope>NUCLEOTIDE SEQUENCE [LARGE SCALE GENOMIC DNA]</scope>
    <source>
        <strain>DSM 17436 / LMG 22146 / PsJN</strain>
    </source>
</reference>
<organism>
    <name type="scientific">Paraburkholderia phytofirmans (strain DSM 17436 / LMG 22146 / PsJN)</name>
    <name type="common">Burkholderia phytofirmans</name>
    <dbReference type="NCBI Taxonomy" id="398527"/>
    <lineage>
        <taxon>Bacteria</taxon>
        <taxon>Pseudomonadati</taxon>
        <taxon>Pseudomonadota</taxon>
        <taxon>Betaproteobacteria</taxon>
        <taxon>Burkholderiales</taxon>
        <taxon>Burkholderiaceae</taxon>
        <taxon>Paraburkholderia</taxon>
    </lineage>
</organism>